<sequence length="89" mass="10330">MVMTAEAKAKVIEEYQTKPGDTGSPEVQVALLTARIKYLTDHFKTHKKDFHSRTGLLKMVGQRRNILKYLKSKDVQRYRDLIARLGLRK</sequence>
<reference key="1">
    <citation type="submission" date="2009-06" db="EMBL/GenBank/DDBJ databases">
        <title>Complete sequence of Desulfovibrio salexigens DSM 2638.</title>
        <authorList>
            <consortium name="US DOE Joint Genome Institute"/>
            <person name="Lucas S."/>
            <person name="Copeland A."/>
            <person name="Lapidus A."/>
            <person name="Glavina del Rio T."/>
            <person name="Tice H."/>
            <person name="Bruce D."/>
            <person name="Goodwin L."/>
            <person name="Pitluck S."/>
            <person name="Munk A.C."/>
            <person name="Brettin T."/>
            <person name="Detter J.C."/>
            <person name="Han C."/>
            <person name="Tapia R."/>
            <person name="Larimer F."/>
            <person name="Land M."/>
            <person name="Hauser L."/>
            <person name="Kyrpides N."/>
            <person name="Anderson I."/>
            <person name="Wall J.D."/>
            <person name="Arkin A.P."/>
            <person name="Dehal P."/>
            <person name="Chivian D."/>
            <person name="Giles B."/>
            <person name="Hazen T.C."/>
        </authorList>
    </citation>
    <scope>NUCLEOTIDE SEQUENCE [LARGE SCALE GENOMIC DNA]</scope>
    <source>
        <strain>ATCC 14822 / DSM 2638 / NCIMB 8403 / VKM B-1763</strain>
    </source>
</reference>
<gene>
    <name evidence="1" type="primary">rpsO</name>
    <name type="ordered locus">Desal_0997</name>
</gene>
<protein>
    <recommendedName>
        <fullName evidence="1">Small ribosomal subunit protein uS15</fullName>
    </recommendedName>
    <alternativeName>
        <fullName evidence="2">30S ribosomal protein S15</fullName>
    </alternativeName>
</protein>
<dbReference type="EMBL" id="CP001649">
    <property type="protein sequence ID" value="ACS79062.1"/>
    <property type="molecule type" value="Genomic_DNA"/>
</dbReference>
<dbReference type="RefSeq" id="WP_015850881.1">
    <property type="nucleotide sequence ID" value="NC_012881.1"/>
</dbReference>
<dbReference type="SMR" id="C6C0C8"/>
<dbReference type="STRING" id="526222.Desal_0997"/>
<dbReference type="KEGG" id="dsa:Desal_0997"/>
<dbReference type="eggNOG" id="COG0184">
    <property type="taxonomic scope" value="Bacteria"/>
</dbReference>
<dbReference type="HOGENOM" id="CLU_148518_0_0_7"/>
<dbReference type="OrthoDB" id="9799262at2"/>
<dbReference type="Proteomes" id="UP000002601">
    <property type="component" value="Chromosome"/>
</dbReference>
<dbReference type="GO" id="GO:0022627">
    <property type="term" value="C:cytosolic small ribosomal subunit"/>
    <property type="evidence" value="ECO:0007669"/>
    <property type="project" value="TreeGrafter"/>
</dbReference>
<dbReference type="GO" id="GO:0019843">
    <property type="term" value="F:rRNA binding"/>
    <property type="evidence" value="ECO:0007669"/>
    <property type="project" value="UniProtKB-UniRule"/>
</dbReference>
<dbReference type="GO" id="GO:0003735">
    <property type="term" value="F:structural constituent of ribosome"/>
    <property type="evidence" value="ECO:0007669"/>
    <property type="project" value="InterPro"/>
</dbReference>
<dbReference type="GO" id="GO:0006412">
    <property type="term" value="P:translation"/>
    <property type="evidence" value="ECO:0007669"/>
    <property type="project" value="UniProtKB-UniRule"/>
</dbReference>
<dbReference type="CDD" id="cd00353">
    <property type="entry name" value="Ribosomal_S15p_S13e"/>
    <property type="match status" value="1"/>
</dbReference>
<dbReference type="FunFam" id="1.10.287.10:FF:000002">
    <property type="entry name" value="30S ribosomal protein S15"/>
    <property type="match status" value="1"/>
</dbReference>
<dbReference type="Gene3D" id="6.10.250.3130">
    <property type="match status" value="1"/>
</dbReference>
<dbReference type="Gene3D" id="1.10.287.10">
    <property type="entry name" value="S15/NS1, RNA-binding"/>
    <property type="match status" value="1"/>
</dbReference>
<dbReference type="HAMAP" id="MF_01343_B">
    <property type="entry name" value="Ribosomal_uS15_B"/>
    <property type="match status" value="1"/>
</dbReference>
<dbReference type="InterPro" id="IPR000589">
    <property type="entry name" value="Ribosomal_uS15"/>
</dbReference>
<dbReference type="InterPro" id="IPR005290">
    <property type="entry name" value="Ribosomal_uS15_bac-type"/>
</dbReference>
<dbReference type="InterPro" id="IPR009068">
    <property type="entry name" value="uS15_NS1_RNA-bd_sf"/>
</dbReference>
<dbReference type="NCBIfam" id="TIGR00952">
    <property type="entry name" value="S15_bact"/>
    <property type="match status" value="1"/>
</dbReference>
<dbReference type="PANTHER" id="PTHR23321">
    <property type="entry name" value="RIBOSOMAL PROTEIN S15, BACTERIAL AND ORGANELLAR"/>
    <property type="match status" value="1"/>
</dbReference>
<dbReference type="PANTHER" id="PTHR23321:SF26">
    <property type="entry name" value="SMALL RIBOSOMAL SUBUNIT PROTEIN US15M"/>
    <property type="match status" value="1"/>
</dbReference>
<dbReference type="Pfam" id="PF00312">
    <property type="entry name" value="Ribosomal_S15"/>
    <property type="match status" value="1"/>
</dbReference>
<dbReference type="SMART" id="SM01387">
    <property type="entry name" value="Ribosomal_S15"/>
    <property type="match status" value="1"/>
</dbReference>
<dbReference type="SUPFAM" id="SSF47060">
    <property type="entry name" value="S15/NS1 RNA-binding domain"/>
    <property type="match status" value="1"/>
</dbReference>
<dbReference type="PROSITE" id="PS00362">
    <property type="entry name" value="RIBOSOMAL_S15"/>
    <property type="match status" value="1"/>
</dbReference>
<feature type="chain" id="PRO_1000214752" description="Small ribosomal subunit protein uS15">
    <location>
        <begin position="1"/>
        <end position="89"/>
    </location>
</feature>
<organism>
    <name type="scientific">Maridesulfovibrio salexigens (strain ATCC 14822 / DSM 2638 / NCIMB 8403 / VKM B-1763)</name>
    <name type="common">Desulfovibrio salexigens</name>
    <dbReference type="NCBI Taxonomy" id="526222"/>
    <lineage>
        <taxon>Bacteria</taxon>
        <taxon>Pseudomonadati</taxon>
        <taxon>Thermodesulfobacteriota</taxon>
        <taxon>Desulfovibrionia</taxon>
        <taxon>Desulfovibrionales</taxon>
        <taxon>Desulfovibrionaceae</taxon>
        <taxon>Maridesulfovibrio</taxon>
    </lineage>
</organism>
<keyword id="KW-1185">Reference proteome</keyword>
<keyword id="KW-0687">Ribonucleoprotein</keyword>
<keyword id="KW-0689">Ribosomal protein</keyword>
<keyword id="KW-0694">RNA-binding</keyword>
<keyword id="KW-0699">rRNA-binding</keyword>
<name>RS15_MARSD</name>
<comment type="function">
    <text evidence="1">One of the primary rRNA binding proteins, it binds directly to 16S rRNA where it helps nucleate assembly of the platform of the 30S subunit by binding and bridging several RNA helices of the 16S rRNA.</text>
</comment>
<comment type="function">
    <text evidence="1">Forms an intersubunit bridge (bridge B4) with the 23S rRNA of the 50S subunit in the ribosome.</text>
</comment>
<comment type="subunit">
    <text evidence="1">Part of the 30S ribosomal subunit. Forms a bridge to the 50S subunit in the 70S ribosome, contacting the 23S rRNA.</text>
</comment>
<comment type="similarity">
    <text evidence="1">Belongs to the universal ribosomal protein uS15 family.</text>
</comment>
<proteinExistence type="inferred from homology"/>
<accession>C6C0C8</accession>
<evidence type="ECO:0000255" key="1">
    <source>
        <dbReference type="HAMAP-Rule" id="MF_01343"/>
    </source>
</evidence>
<evidence type="ECO:0000305" key="2"/>